<reference key="1">
    <citation type="submission" date="2007-07" db="EMBL/GenBank/DDBJ databases">
        <title>Complete genome sequence of Campylobacter jejuni subsp doylei 269.97 isolated from human blood.</title>
        <authorList>
            <person name="Fouts D.E."/>
            <person name="Mongodin E.F."/>
            <person name="Puiu D."/>
            <person name="Sebastian Y."/>
            <person name="Miller W.G."/>
            <person name="Mandrell R.E."/>
            <person name="Lastovica A.J."/>
            <person name="Nelson K.E."/>
        </authorList>
    </citation>
    <scope>NUCLEOTIDE SEQUENCE [LARGE SCALE GENOMIC DNA]</scope>
    <source>
        <strain>ATCC BAA-1458 / RM4099 / 269.97</strain>
    </source>
</reference>
<name>COAD_CAMJD</name>
<accession>A7H475</accession>
<comment type="function">
    <text evidence="1">Reversibly transfers an adenylyl group from ATP to 4'-phosphopantetheine, yielding dephospho-CoA (dPCoA) and pyrophosphate.</text>
</comment>
<comment type="catalytic activity">
    <reaction evidence="1">
        <text>(R)-4'-phosphopantetheine + ATP + H(+) = 3'-dephospho-CoA + diphosphate</text>
        <dbReference type="Rhea" id="RHEA:19801"/>
        <dbReference type="ChEBI" id="CHEBI:15378"/>
        <dbReference type="ChEBI" id="CHEBI:30616"/>
        <dbReference type="ChEBI" id="CHEBI:33019"/>
        <dbReference type="ChEBI" id="CHEBI:57328"/>
        <dbReference type="ChEBI" id="CHEBI:61723"/>
        <dbReference type="EC" id="2.7.7.3"/>
    </reaction>
</comment>
<comment type="cofactor">
    <cofactor evidence="1">
        <name>Mg(2+)</name>
        <dbReference type="ChEBI" id="CHEBI:18420"/>
    </cofactor>
</comment>
<comment type="pathway">
    <text evidence="1">Cofactor biosynthesis; coenzyme A biosynthesis; CoA from (R)-pantothenate: step 4/5.</text>
</comment>
<comment type="subunit">
    <text evidence="1">Homohexamer.</text>
</comment>
<comment type="subcellular location">
    <subcellularLocation>
        <location evidence="1">Cytoplasm</location>
    </subcellularLocation>
</comment>
<comment type="similarity">
    <text evidence="1">Belongs to the bacterial CoaD family.</text>
</comment>
<feature type="chain" id="PRO_1000011117" description="Phosphopantetheine adenylyltransferase">
    <location>
        <begin position="1"/>
        <end position="158"/>
    </location>
</feature>
<feature type="binding site" evidence="1">
    <location>
        <begin position="8"/>
        <end position="9"/>
    </location>
    <ligand>
        <name>ATP</name>
        <dbReference type="ChEBI" id="CHEBI:30616"/>
    </ligand>
</feature>
<feature type="binding site" evidence="1">
    <location>
        <position position="8"/>
    </location>
    <ligand>
        <name>substrate</name>
    </ligand>
</feature>
<feature type="binding site" evidence="1">
    <location>
        <position position="16"/>
    </location>
    <ligand>
        <name>ATP</name>
        <dbReference type="ChEBI" id="CHEBI:30616"/>
    </ligand>
</feature>
<feature type="binding site" evidence="1">
    <location>
        <position position="40"/>
    </location>
    <ligand>
        <name>substrate</name>
    </ligand>
</feature>
<feature type="binding site" evidence="1">
    <location>
        <position position="72"/>
    </location>
    <ligand>
        <name>substrate</name>
    </ligand>
</feature>
<feature type="binding site" evidence="1">
    <location>
        <position position="86"/>
    </location>
    <ligand>
        <name>substrate</name>
    </ligand>
</feature>
<feature type="binding site" evidence="1">
    <location>
        <begin position="87"/>
        <end position="89"/>
    </location>
    <ligand>
        <name>ATP</name>
        <dbReference type="ChEBI" id="CHEBI:30616"/>
    </ligand>
</feature>
<feature type="binding site" evidence="1">
    <location>
        <position position="97"/>
    </location>
    <ligand>
        <name>ATP</name>
        <dbReference type="ChEBI" id="CHEBI:30616"/>
    </ligand>
</feature>
<feature type="binding site" evidence="1">
    <location>
        <begin position="122"/>
        <end position="128"/>
    </location>
    <ligand>
        <name>ATP</name>
        <dbReference type="ChEBI" id="CHEBI:30616"/>
    </ligand>
</feature>
<feature type="site" description="Transition state stabilizer" evidence="1">
    <location>
        <position position="16"/>
    </location>
</feature>
<organism>
    <name type="scientific">Campylobacter jejuni subsp. doylei (strain ATCC BAA-1458 / RM4099 / 269.97)</name>
    <dbReference type="NCBI Taxonomy" id="360109"/>
    <lineage>
        <taxon>Bacteria</taxon>
        <taxon>Pseudomonadati</taxon>
        <taxon>Campylobacterota</taxon>
        <taxon>Epsilonproteobacteria</taxon>
        <taxon>Campylobacterales</taxon>
        <taxon>Campylobacteraceae</taxon>
        <taxon>Campylobacter</taxon>
    </lineage>
</organism>
<evidence type="ECO:0000255" key="1">
    <source>
        <dbReference type="HAMAP-Rule" id="MF_00151"/>
    </source>
</evidence>
<sequence length="158" mass="17816">MTCLYPGTFDPITNGHLDVIKRALKIFDEVIVAIAKSEHKKPCYDLEKRKELALLATQNLKNVKIIAFDNLLVDLAKELKVNTIIRGLRAVSDFEYELQIGYANHALWEDMETIYLMPSLKHAFISSSIVRSIVAHGGDVSSLVPKEILPFLKDQSCM</sequence>
<proteinExistence type="inferred from homology"/>
<dbReference type="EC" id="2.7.7.3" evidence="1"/>
<dbReference type="EMBL" id="CP000768">
    <property type="protein sequence ID" value="ABS43808.1"/>
    <property type="molecule type" value="Genomic_DNA"/>
</dbReference>
<dbReference type="SMR" id="A7H475"/>
<dbReference type="KEGG" id="cjd:JJD26997_1245"/>
<dbReference type="HOGENOM" id="CLU_100149_0_1_7"/>
<dbReference type="UniPathway" id="UPA00241">
    <property type="reaction ID" value="UER00355"/>
</dbReference>
<dbReference type="Proteomes" id="UP000002302">
    <property type="component" value="Chromosome"/>
</dbReference>
<dbReference type="GO" id="GO:0005737">
    <property type="term" value="C:cytoplasm"/>
    <property type="evidence" value="ECO:0007669"/>
    <property type="project" value="UniProtKB-SubCell"/>
</dbReference>
<dbReference type="GO" id="GO:0005524">
    <property type="term" value="F:ATP binding"/>
    <property type="evidence" value="ECO:0007669"/>
    <property type="project" value="UniProtKB-KW"/>
</dbReference>
<dbReference type="GO" id="GO:0004595">
    <property type="term" value="F:pantetheine-phosphate adenylyltransferase activity"/>
    <property type="evidence" value="ECO:0007669"/>
    <property type="project" value="UniProtKB-UniRule"/>
</dbReference>
<dbReference type="GO" id="GO:0015937">
    <property type="term" value="P:coenzyme A biosynthetic process"/>
    <property type="evidence" value="ECO:0007669"/>
    <property type="project" value="UniProtKB-UniRule"/>
</dbReference>
<dbReference type="CDD" id="cd02163">
    <property type="entry name" value="PPAT"/>
    <property type="match status" value="1"/>
</dbReference>
<dbReference type="Gene3D" id="3.40.50.620">
    <property type="entry name" value="HUPs"/>
    <property type="match status" value="1"/>
</dbReference>
<dbReference type="HAMAP" id="MF_00151">
    <property type="entry name" value="PPAT_bact"/>
    <property type="match status" value="1"/>
</dbReference>
<dbReference type="InterPro" id="IPR004821">
    <property type="entry name" value="Cyt_trans-like"/>
</dbReference>
<dbReference type="InterPro" id="IPR001980">
    <property type="entry name" value="PPAT"/>
</dbReference>
<dbReference type="InterPro" id="IPR014729">
    <property type="entry name" value="Rossmann-like_a/b/a_fold"/>
</dbReference>
<dbReference type="NCBIfam" id="TIGR01510">
    <property type="entry name" value="coaD_prev_kdtB"/>
    <property type="match status" value="1"/>
</dbReference>
<dbReference type="NCBIfam" id="TIGR00125">
    <property type="entry name" value="cyt_tran_rel"/>
    <property type="match status" value="1"/>
</dbReference>
<dbReference type="PANTHER" id="PTHR21342">
    <property type="entry name" value="PHOSPHOPANTETHEINE ADENYLYLTRANSFERASE"/>
    <property type="match status" value="1"/>
</dbReference>
<dbReference type="PANTHER" id="PTHR21342:SF1">
    <property type="entry name" value="PHOSPHOPANTETHEINE ADENYLYLTRANSFERASE"/>
    <property type="match status" value="1"/>
</dbReference>
<dbReference type="Pfam" id="PF01467">
    <property type="entry name" value="CTP_transf_like"/>
    <property type="match status" value="1"/>
</dbReference>
<dbReference type="PRINTS" id="PR01020">
    <property type="entry name" value="LPSBIOSNTHSS"/>
</dbReference>
<dbReference type="SUPFAM" id="SSF52374">
    <property type="entry name" value="Nucleotidylyl transferase"/>
    <property type="match status" value="1"/>
</dbReference>
<keyword id="KW-0067">ATP-binding</keyword>
<keyword id="KW-0173">Coenzyme A biosynthesis</keyword>
<keyword id="KW-0963">Cytoplasm</keyword>
<keyword id="KW-0460">Magnesium</keyword>
<keyword id="KW-0547">Nucleotide-binding</keyword>
<keyword id="KW-0548">Nucleotidyltransferase</keyword>
<keyword id="KW-0808">Transferase</keyword>
<gene>
    <name evidence="1" type="primary">coaD</name>
    <name type="ordered locus">JJD26997_1245</name>
</gene>
<protein>
    <recommendedName>
        <fullName evidence="1">Phosphopantetheine adenylyltransferase</fullName>
        <ecNumber evidence="1">2.7.7.3</ecNumber>
    </recommendedName>
    <alternativeName>
        <fullName evidence="1">Dephospho-CoA pyrophosphorylase</fullName>
    </alternativeName>
    <alternativeName>
        <fullName evidence="1">Pantetheine-phosphate adenylyltransferase</fullName>
        <shortName evidence="1">PPAT</shortName>
    </alternativeName>
</protein>